<proteinExistence type="inferred from homology"/>
<organism>
    <name type="scientific">Leuconostoc citreum (strain KM20)</name>
    <dbReference type="NCBI Taxonomy" id="349519"/>
    <lineage>
        <taxon>Bacteria</taxon>
        <taxon>Bacillati</taxon>
        <taxon>Bacillota</taxon>
        <taxon>Bacilli</taxon>
        <taxon>Lactobacillales</taxon>
        <taxon>Lactobacillaceae</taxon>
        <taxon>Leuconostoc</taxon>
    </lineage>
</organism>
<name>Y164_LEUCK</name>
<keyword id="KW-1003">Cell membrane</keyword>
<keyword id="KW-0472">Membrane</keyword>
<keyword id="KW-1185">Reference proteome</keyword>
<keyword id="KW-0812">Transmembrane</keyword>
<keyword id="KW-1133">Transmembrane helix</keyword>
<evidence type="ECO:0000255" key="1">
    <source>
        <dbReference type="HAMAP-Rule" id="MF_01572"/>
    </source>
</evidence>
<sequence length="188" mass="20157">MHNQKKNQGFSVKSVVATGIGAAVFFVLMKFIAIPTGVPNTTINVAEGWLALIAGLFGPVVGLLVGLIGHTLNDAVTYGAPWWSWVIADGVFGLLLGFGKKYLALEYGELTTKKLVQFNVWQAVSNVLVWVIIAPLGDIIIYKEAAQKVFLQGAVTTVVNTISVAIIGSLLLVAYVKSRPKKSSLRSE</sequence>
<reference key="1">
    <citation type="journal article" date="2008" name="J. Bacteriol.">
        <title>Complete genome sequence of Leuconostoc citreum KM20.</title>
        <authorList>
            <person name="Kim J.F."/>
            <person name="Jeong H."/>
            <person name="Lee J.-S."/>
            <person name="Choi S.-H."/>
            <person name="Ha M."/>
            <person name="Hur C.-G."/>
            <person name="Kim J.-S."/>
            <person name="Lee S."/>
            <person name="Park H.-S."/>
            <person name="Park Y.-H."/>
            <person name="Oh T.K."/>
        </authorList>
    </citation>
    <scope>NUCLEOTIDE SEQUENCE [LARGE SCALE GENOMIC DNA]</scope>
    <source>
        <strain>KM20</strain>
    </source>
</reference>
<protein>
    <recommendedName>
        <fullName evidence="1">UPF0397 protein LCK_00164</fullName>
    </recommendedName>
</protein>
<feature type="chain" id="PRO_0000382536" description="UPF0397 protein LCK_00164">
    <location>
        <begin position="1"/>
        <end position="188"/>
    </location>
</feature>
<feature type="transmembrane region" description="Helical" evidence="1">
    <location>
        <begin position="15"/>
        <end position="35"/>
    </location>
</feature>
<feature type="transmembrane region" description="Helical" evidence="1">
    <location>
        <begin position="48"/>
        <end position="68"/>
    </location>
</feature>
<feature type="transmembrane region" description="Helical" evidence="1">
    <location>
        <begin position="79"/>
        <end position="99"/>
    </location>
</feature>
<feature type="transmembrane region" description="Helical" evidence="1">
    <location>
        <begin position="121"/>
        <end position="141"/>
    </location>
</feature>
<feature type="transmembrane region" description="Helical" evidence="1">
    <location>
        <begin position="154"/>
        <end position="174"/>
    </location>
</feature>
<comment type="subcellular location">
    <subcellularLocation>
        <location evidence="1">Cell membrane</location>
        <topology evidence="1">Multi-pass membrane protein</topology>
    </subcellularLocation>
</comment>
<comment type="similarity">
    <text evidence="1">Belongs to the UPF0397 family.</text>
</comment>
<accession>B1MWU5</accession>
<dbReference type="EMBL" id="DQ489736">
    <property type="protein sequence ID" value="ACA81997.1"/>
    <property type="molecule type" value="Genomic_DNA"/>
</dbReference>
<dbReference type="RefSeq" id="WP_012305025.1">
    <property type="nucleotide sequence ID" value="NC_010471.1"/>
</dbReference>
<dbReference type="STRING" id="349519.LCK_00164"/>
<dbReference type="KEGG" id="lci:LCK_00164"/>
<dbReference type="eggNOG" id="COG4720">
    <property type="taxonomic scope" value="Bacteria"/>
</dbReference>
<dbReference type="HOGENOM" id="CLU_120023_0_0_9"/>
<dbReference type="OrthoDB" id="4550662at2"/>
<dbReference type="Proteomes" id="UP000002166">
    <property type="component" value="Chromosome"/>
</dbReference>
<dbReference type="GO" id="GO:0005886">
    <property type="term" value="C:plasma membrane"/>
    <property type="evidence" value="ECO:0007669"/>
    <property type="project" value="UniProtKB-SubCell"/>
</dbReference>
<dbReference type="Gene3D" id="1.10.1760.20">
    <property type="match status" value="1"/>
</dbReference>
<dbReference type="HAMAP" id="MF_01572">
    <property type="entry name" value="UPF0397"/>
    <property type="match status" value="1"/>
</dbReference>
<dbReference type="InterPro" id="IPR009825">
    <property type="entry name" value="ECF_substrate-spec-like"/>
</dbReference>
<dbReference type="InterPro" id="IPR022914">
    <property type="entry name" value="UPF0397"/>
</dbReference>
<dbReference type="NCBIfam" id="NF010182">
    <property type="entry name" value="PRK13661.1"/>
    <property type="match status" value="1"/>
</dbReference>
<dbReference type="PANTHER" id="PTHR37815">
    <property type="entry name" value="UPF0397 PROTEIN BC_2624-RELATED"/>
    <property type="match status" value="1"/>
</dbReference>
<dbReference type="PANTHER" id="PTHR37815:SF3">
    <property type="entry name" value="UPF0397 PROTEIN SPR0429"/>
    <property type="match status" value="1"/>
</dbReference>
<dbReference type="Pfam" id="PF07155">
    <property type="entry name" value="ECF-ribofla_trS"/>
    <property type="match status" value="1"/>
</dbReference>
<gene>
    <name type="ordered locus">LCK_00164</name>
</gene>